<dbReference type="EC" id="6.1.1.5" evidence="1"/>
<dbReference type="EMBL" id="FM209186">
    <property type="protein sequence ID" value="CAW29697.1"/>
    <property type="molecule type" value="Genomic_DNA"/>
</dbReference>
<dbReference type="RefSeq" id="WP_004352756.1">
    <property type="nucleotide sequence ID" value="NC_011770.1"/>
</dbReference>
<dbReference type="SMR" id="B7V0A3"/>
<dbReference type="KEGG" id="pag:PLES_49431"/>
<dbReference type="HOGENOM" id="CLU_001493_7_1_6"/>
<dbReference type="GO" id="GO:0005829">
    <property type="term" value="C:cytosol"/>
    <property type="evidence" value="ECO:0007669"/>
    <property type="project" value="TreeGrafter"/>
</dbReference>
<dbReference type="GO" id="GO:0002161">
    <property type="term" value="F:aminoacyl-tRNA deacylase activity"/>
    <property type="evidence" value="ECO:0007669"/>
    <property type="project" value="InterPro"/>
</dbReference>
<dbReference type="GO" id="GO:0005524">
    <property type="term" value="F:ATP binding"/>
    <property type="evidence" value="ECO:0007669"/>
    <property type="project" value="UniProtKB-UniRule"/>
</dbReference>
<dbReference type="GO" id="GO:0004822">
    <property type="term" value="F:isoleucine-tRNA ligase activity"/>
    <property type="evidence" value="ECO:0007669"/>
    <property type="project" value="UniProtKB-UniRule"/>
</dbReference>
<dbReference type="GO" id="GO:0000049">
    <property type="term" value="F:tRNA binding"/>
    <property type="evidence" value="ECO:0007669"/>
    <property type="project" value="InterPro"/>
</dbReference>
<dbReference type="GO" id="GO:0008270">
    <property type="term" value="F:zinc ion binding"/>
    <property type="evidence" value="ECO:0007669"/>
    <property type="project" value="UniProtKB-UniRule"/>
</dbReference>
<dbReference type="GO" id="GO:0006428">
    <property type="term" value="P:isoleucyl-tRNA aminoacylation"/>
    <property type="evidence" value="ECO:0007669"/>
    <property type="project" value="UniProtKB-UniRule"/>
</dbReference>
<dbReference type="CDD" id="cd07960">
    <property type="entry name" value="Anticodon_Ia_Ile_BEm"/>
    <property type="match status" value="1"/>
</dbReference>
<dbReference type="CDD" id="cd00818">
    <property type="entry name" value="IleRS_core"/>
    <property type="match status" value="1"/>
</dbReference>
<dbReference type="FunFam" id="1.10.730.20:FF:000001">
    <property type="entry name" value="Isoleucine--tRNA ligase"/>
    <property type="match status" value="1"/>
</dbReference>
<dbReference type="FunFam" id="3.40.50.620:FF:000042">
    <property type="entry name" value="Isoleucine--tRNA ligase"/>
    <property type="match status" value="1"/>
</dbReference>
<dbReference type="FunFam" id="3.40.50.620:FF:000048">
    <property type="entry name" value="Isoleucine--tRNA ligase"/>
    <property type="match status" value="1"/>
</dbReference>
<dbReference type="Gene3D" id="1.10.730.20">
    <property type="match status" value="1"/>
</dbReference>
<dbReference type="Gene3D" id="3.40.50.620">
    <property type="entry name" value="HUPs"/>
    <property type="match status" value="2"/>
</dbReference>
<dbReference type="Gene3D" id="1.10.10.830">
    <property type="entry name" value="Ile-tRNA synthetase CP2 domain-like"/>
    <property type="match status" value="1"/>
</dbReference>
<dbReference type="HAMAP" id="MF_02002">
    <property type="entry name" value="Ile_tRNA_synth_type1"/>
    <property type="match status" value="1"/>
</dbReference>
<dbReference type="InterPro" id="IPR001412">
    <property type="entry name" value="aa-tRNA-synth_I_CS"/>
</dbReference>
<dbReference type="InterPro" id="IPR002300">
    <property type="entry name" value="aa-tRNA-synth_Ia"/>
</dbReference>
<dbReference type="InterPro" id="IPR033708">
    <property type="entry name" value="Anticodon_Ile_BEm"/>
</dbReference>
<dbReference type="InterPro" id="IPR002301">
    <property type="entry name" value="Ile-tRNA-ligase"/>
</dbReference>
<dbReference type="InterPro" id="IPR023585">
    <property type="entry name" value="Ile-tRNA-ligase_type1"/>
</dbReference>
<dbReference type="InterPro" id="IPR050081">
    <property type="entry name" value="Ile-tRNA_ligase"/>
</dbReference>
<dbReference type="InterPro" id="IPR013155">
    <property type="entry name" value="M/V/L/I-tRNA-synth_anticd-bd"/>
</dbReference>
<dbReference type="InterPro" id="IPR014729">
    <property type="entry name" value="Rossmann-like_a/b/a_fold"/>
</dbReference>
<dbReference type="InterPro" id="IPR009080">
    <property type="entry name" value="tRNAsynth_Ia_anticodon-bd"/>
</dbReference>
<dbReference type="InterPro" id="IPR009008">
    <property type="entry name" value="Val/Leu/Ile-tRNA-synth_edit"/>
</dbReference>
<dbReference type="InterPro" id="IPR010663">
    <property type="entry name" value="Znf_FPG/IleRS"/>
</dbReference>
<dbReference type="NCBIfam" id="TIGR00392">
    <property type="entry name" value="ileS"/>
    <property type="match status" value="1"/>
</dbReference>
<dbReference type="PANTHER" id="PTHR42765:SF1">
    <property type="entry name" value="ISOLEUCINE--TRNA LIGASE, MITOCHONDRIAL"/>
    <property type="match status" value="1"/>
</dbReference>
<dbReference type="PANTHER" id="PTHR42765">
    <property type="entry name" value="SOLEUCYL-TRNA SYNTHETASE"/>
    <property type="match status" value="1"/>
</dbReference>
<dbReference type="Pfam" id="PF08264">
    <property type="entry name" value="Anticodon_1"/>
    <property type="match status" value="1"/>
</dbReference>
<dbReference type="Pfam" id="PF00133">
    <property type="entry name" value="tRNA-synt_1"/>
    <property type="match status" value="1"/>
</dbReference>
<dbReference type="Pfam" id="PF06827">
    <property type="entry name" value="zf-FPG_IleRS"/>
    <property type="match status" value="1"/>
</dbReference>
<dbReference type="PRINTS" id="PR00984">
    <property type="entry name" value="TRNASYNTHILE"/>
</dbReference>
<dbReference type="SUPFAM" id="SSF47323">
    <property type="entry name" value="Anticodon-binding domain of a subclass of class I aminoacyl-tRNA synthetases"/>
    <property type="match status" value="1"/>
</dbReference>
<dbReference type="SUPFAM" id="SSF52374">
    <property type="entry name" value="Nucleotidylyl transferase"/>
    <property type="match status" value="1"/>
</dbReference>
<dbReference type="SUPFAM" id="SSF50677">
    <property type="entry name" value="ValRS/IleRS/LeuRS editing domain"/>
    <property type="match status" value="1"/>
</dbReference>
<dbReference type="PROSITE" id="PS00178">
    <property type="entry name" value="AA_TRNA_LIGASE_I"/>
    <property type="match status" value="1"/>
</dbReference>
<organism>
    <name type="scientific">Pseudomonas aeruginosa (strain LESB58)</name>
    <dbReference type="NCBI Taxonomy" id="557722"/>
    <lineage>
        <taxon>Bacteria</taxon>
        <taxon>Pseudomonadati</taxon>
        <taxon>Pseudomonadota</taxon>
        <taxon>Gammaproteobacteria</taxon>
        <taxon>Pseudomonadales</taxon>
        <taxon>Pseudomonadaceae</taxon>
        <taxon>Pseudomonas</taxon>
    </lineage>
</organism>
<evidence type="ECO:0000255" key="1">
    <source>
        <dbReference type="HAMAP-Rule" id="MF_02002"/>
    </source>
</evidence>
<comment type="function">
    <text evidence="1">Catalyzes the attachment of isoleucine to tRNA(Ile). As IleRS can inadvertently accommodate and process structurally similar amino acids such as valine, to avoid such errors it has two additional distinct tRNA(Ile)-dependent editing activities. One activity is designated as 'pretransfer' editing and involves the hydrolysis of activated Val-AMP. The other activity is designated 'posttransfer' editing and involves deacylation of mischarged Val-tRNA(Ile).</text>
</comment>
<comment type="catalytic activity">
    <reaction evidence="1">
        <text>tRNA(Ile) + L-isoleucine + ATP = L-isoleucyl-tRNA(Ile) + AMP + diphosphate</text>
        <dbReference type="Rhea" id="RHEA:11060"/>
        <dbReference type="Rhea" id="RHEA-COMP:9666"/>
        <dbReference type="Rhea" id="RHEA-COMP:9695"/>
        <dbReference type="ChEBI" id="CHEBI:30616"/>
        <dbReference type="ChEBI" id="CHEBI:33019"/>
        <dbReference type="ChEBI" id="CHEBI:58045"/>
        <dbReference type="ChEBI" id="CHEBI:78442"/>
        <dbReference type="ChEBI" id="CHEBI:78528"/>
        <dbReference type="ChEBI" id="CHEBI:456215"/>
        <dbReference type="EC" id="6.1.1.5"/>
    </reaction>
</comment>
<comment type="cofactor">
    <cofactor evidence="1">
        <name>Zn(2+)</name>
        <dbReference type="ChEBI" id="CHEBI:29105"/>
    </cofactor>
    <text evidence="1">Binds 1 zinc ion per subunit.</text>
</comment>
<comment type="subunit">
    <text evidence="1">Monomer.</text>
</comment>
<comment type="subcellular location">
    <subcellularLocation>
        <location evidence="1">Cytoplasm</location>
    </subcellularLocation>
</comment>
<comment type="domain">
    <text evidence="1">IleRS has two distinct active sites: one for aminoacylation and one for editing. The misactivated valine is translocated from the active site to the editing site, which sterically excludes the correctly activated isoleucine. The single editing site contains two valyl binding pockets, one specific for each substrate (Val-AMP or Val-tRNA(Ile)).</text>
</comment>
<comment type="similarity">
    <text evidence="1">Belongs to the class-I aminoacyl-tRNA synthetase family. IleS type 1 subfamily.</text>
</comment>
<feature type="chain" id="PRO_1000189188" description="Isoleucine--tRNA ligase">
    <location>
        <begin position="1"/>
        <end position="943"/>
    </location>
</feature>
<feature type="short sequence motif" description="'HIGH' region">
    <location>
        <begin position="58"/>
        <end position="68"/>
    </location>
</feature>
<feature type="short sequence motif" description="'KMSKS' region">
    <location>
        <begin position="608"/>
        <end position="612"/>
    </location>
</feature>
<feature type="binding site" evidence="1">
    <location>
        <position position="567"/>
    </location>
    <ligand>
        <name>L-isoleucyl-5'-AMP</name>
        <dbReference type="ChEBI" id="CHEBI:178002"/>
    </ligand>
</feature>
<feature type="binding site" evidence="1">
    <location>
        <position position="611"/>
    </location>
    <ligand>
        <name>ATP</name>
        <dbReference type="ChEBI" id="CHEBI:30616"/>
    </ligand>
</feature>
<feature type="binding site" evidence="1">
    <location>
        <position position="906"/>
    </location>
    <ligand>
        <name>Zn(2+)</name>
        <dbReference type="ChEBI" id="CHEBI:29105"/>
    </ligand>
</feature>
<feature type="binding site" evidence="1">
    <location>
        <position position="909"/>
    </location>
    <ligand>
        <name>Zn(2+)</name>
        <dbReference type="ChEBI" id="CHEBI:29105"/>
    </ligand>
</feature>
<feature type="binding site" evidence="1">
    <location>
        <position position="926"/>
    </location>
    <ligand>
        <name>Zn(2+)</name>
        <dbReference type="ChEBI" id="CHEBI:29105"/>
    </ligand>
</feature>
<feature type="binding site" evidence="1">
    <location>
        <position position="929"/>
    </location>
    <ligand>
        <name>Zn(2+)</name>
        <dbReference type="ChEBI" id="CHEBI:29105"/>
    </ligand>
</feature>
<reference key="1">
    <citation type="journal article" date="2009" name="Genome Res.">
        <title>Newly introduced genomic prophage islands are critical determinants of in vivo competitiveness in the Liverpool epidemic strain of Pseudomonas aeruginosa.</title>
        <authorList>
            <person name="Winstanley C."/>
            <person name="Langille M.G.I."/>
            <person name="Fothergill J.L."/>
            <person name="Kukavica-Ibrulj I."/>
            <person name="Paradis-Bleau C."/>
            <person name="Sanschagrin F."/>
            <person name="Thomson N.R."/>
            <person name="Winsor G.L."/>
            <person name="Quail M.A."/>
            <person name="Lennard N."/>
            <person name="Bignell A."/>
            <person name="Clarke L."/>
            <person name="Seeger K."/>
            <person name="Saunders D."/>
            <person name="Harris D."/>
            <person name="Parkhill J."/>
            <person name="Hancock R.E.W."/>
            <person name="Brinkman F.S.L."/>
            <person name="Levesque R.C."/>
        </authorList>
    </citation>
    <scope>NUCLEOTIDE SEQUENCE [LARGE SCALE GENOMIC DNA]</scope>
    <source>
        <strain>LESB58</strain>
    </source>
</reference>
<name>SYI_PSEA8</name>
<protein>
    <recommendedName>
        <fullName evidence="1">Isoleucine--tRNA ligase</fullName>
        <ecNumber evidence="1">6.1.1.5</ecNumber>
    </recommendedName>
    <alternativeName>
        <fullName evidence="1">Isoleucyl-tRNA synthetase</fullName>
        <shortName evidence="1">IleRS</shortName>
    </alternativeName>
</protein>
<proteinExistence type="inferred from homology"/>
<gene>
    <name evidence="1" type="primary">ileS</name>
    <name type="ordered locus">PLES_49431</name>
</gene>
<sequence length="943" mass="105452">MTDYKATLNLPETAFPMKAGLPQREPETLKFWNDIGLYQKLRAIGGDRPKFVLHDGPPYANGSIHIGHAVNKILKDIIVRSKTLAGYDAPYVPGWDCHGLPIEHKVETTHGKNLPADKTRELCREYAAEQIEGQKADFIRLGVLGEWDNPYKTMNFANEANEIRALAEMVKQDFVFKGLKPVNWCFDCGSALAEAEVEYADKKSPTIDVGFPVADADKLAAAFGLAALDKPAQIVIWTTTPWTIPANQALNVHPEIDYALVDAGDRYLVLAEALVESCLARYQREGKVVATAKGEALELINFRHPFYERLSPVYLADYVALDAGTGIVHSSPAYGEDDFYTCKRYGMSNDDILSPVQSNGVYVDSLPFFGGQFIWKANPNVVAKLEEVGSLLAHETINHSYMHCWRHKTPLIYRATAQWFVGMDKQPRQGASLRERALEAITQTEFVPGWGQARLHGMIAGRPDWCISRQRNWGVPIPFFLHKASGELHPRTVELMEEVAQRVEKEGIEAWFKLDAAELLGEDAAQYEKINDTLDVWFDSGTTHWHVLRGSHRIGHASGPVADLYLEGSDQHRGWFHSSLLTGCAIDNHAPYRQLLTHGFTVDESGRKMSKSLGNTVVPQTVIDTLGADILRLWVASTDYSGEIAVSQQILQRSADAYRRIRNTTRFLLSNLNGFDPATDLLPPQEMLALDRWAVDRALLLQREIEEAYREYRFWNVYSKVHNFCVQELGGFYLDIIKDRQYTTGANSVARRSCQTALFHIAEALVRWIAPILAFTAEEVWKFLPGERAESVMLATWYDGLSELPADVTLNRQYWEQVMAVKAAVNKELENQRAAKAVGGNLQAEVTLYAEDALQVQLAKLGNELRFVLITSTATLAPLSAAPADAVDSEVAGLKLKVVKSTHAKCGRCWHHREDVGQHAAHPDLCGRCIENIEGSGEVRHYA</sequence>
<accession>B7V0A3</accession>
<keyword id="KW-0030">Aminoacyl-tRNA synthetase</keyword>
<keyword id="KW-0067">ATP-binding</keyword>
<keyword id="KW-0963">Cytoplasm</keyword>
<keyword id="KW-0436">Ligase</keyword>
<keyword id="KW-0479">Metal-binding</keyword>
<keyword id="KW-0547">Nucleotide-binding</keyword>
<keyword id="KW-0648">Protein biosynthesis</keyword>
<keyword id="KW-0862">Zinc</keyword>